<proteinExistence type="inferred from homology"/>
<feature type="chain" id="PRO_0000416767" description="Tigger transposable element-derived protein 5">
    <location>
        <begin position="1"/>
        <end position="643"/>
    </location>
</feature>
<feature type="domain" description="HTH psq-type" evidence="3">
    <location>
        <begin position="52"/>
        <end position="103"/>
    </location>
</feature>
<feature type="domain" description="HTH CENPB-type" evidence="4">
    <location>
        <begin position="117"/>
        <end position="190"/>
    </location>
</feature>
<feature type="domain" description="DDE-1" evidence="2">
    <location>
        <begin position="238"/>
        <end position="358"/>
    </location>
</feature>
<feature type="DNA-binding region" description="H-T-H motif" evidence="1">
    <location>
        <begin position="79"/>
        <end position="99"/>
    </location>
</feature>
<feature type="DNA-binding region" description="H-T-H motif" evidence="1">
    <location>
        <begin position="150"/>
        <end position="183"/>
    </location>
</feature>
<feature type="region of interest" description="Disordered" evidence="5">
    <location>
        <begin position="1"/>
        <end position="50"/>
    </location>
</feature>
<feature type="region of interest" description="Disordered" evidence="5">
    <location>
        <begin position="197"/>
        <end position="236"/>
    </location>
</feature>
<feature type="region of interest" description="Disordered" evidence="5">
    <location>
        <begin position="366"/>
        <end position="395"/>
    </location>
</feature>
<feature type="compositionally biased region" description="Pro residues" evidence="5">
    <location>
        <begin position="20"/>
        <end position="48"/>
    </location>
</feature>
<accession>G3MY25</accession>
<name>TIGD5_BOVIN</name>
<protein>
    <recommendedName>
        <fullName>Tigger transposable element-derived protein 5</fullName>
    </recommendedName>
</protein>
<comment type="subcellular location">
    <subcellularLocation>
        <location evidence="6">Nucleus</location>
    </subcellularLocation>
</comment>
<comment type="similarity">
    <text evidence="6">Belongs to the tigger transposable element derived protein family.</text>
</comment>
<keyword id="KW-0238">DNA-binding</keyword>
<keyword id="KW-0539">Nucleus</keyword>
<keyword id="KW-1185">Reference proteome</keyword>
<evidence type="ECO:0000250" key="1"/>
<evidence type="ECO:0000255" key="2"/>
<evidence type="ECO:0000255" key="3">
    <source>
        <dbReference type="PROSITE-ProRule" id="PRU00320"/>
    </source>
</evidence>
<evidence type="ECO:0000255" key="4">
    <source>
        <dbReference type="PROSITE-ProRule" id="PRU00583"/>
    </source>
</evidence>
<evidence type="ECO:0000256" key="5">
    <source>
        <dbReference type="SAM" id="MobiDB-lite"/>
    </source>
</evidence>
<evidence type="ECO:0000305" key="6"/>
<dbReference type="EMBL" id="DAAA02037468">
    <property type="status" value="NOT_ANNOTATED_CDS"/>
    <property type="molecule type" value="Genomic_DNA"/>
</dbReference>
<dbReference type="RefSeq" id="XP_005192620.2">
    <property type="nucleotide sequence ID" value="XM_005192563.3"/>
</dbReference>
<dbReference type="RefSeq" id="XP_005215336.1">
    <property type="nucleotide sequence ID" value="XM_005215279.3"/>
</dbReference>
<dbReference type="SMR" id="G3MY25"/>
<dbReference type="FunCoup" id="G3MY25">
    <property type="interactions" value="297"/>
</dbReference>
<dbReference type="STRING" id="9913.ENSBTAP00000054451"/>
<dbReference type="PaxDb" id="9913-ENSBTAP00000054451"/>
<dbReference type="GeneID" id="101903505"/>
<dbReference type="KEGG" id="bta:101903505"/>
<dbReference type="CTD" id="84948"/>
<dbReference type="eggNOG" id="KOG3105">
    <property type="taxonomic scope" value="Eukaryota"/>
</dbReference>
<dbReference type="HOGENOM" id="CLU_018294_1_1_1"/>
<dbReference type="InParanoid" id="G3MY25"/>
<dbReference type="OrthoDB" id="5919228at2759"/>
<dbReference type="Proteomes" id="UP000009136">
    <property type="component" value="Unplaced"/>
</dbReference>
<dbReference type="GO" id="GO:0005634">
    <property type="term" value="C:nucleus"/>
    <property type="evidence" value="ECO:0000318"/>
    <property type="project" value="GO_Central"/>
</dbReference>
<dbReference type="GO" id="GO:0003677">
    <property type="term" value="F:DNA binding"/>
    <property type="evidence" value="ECO:0000318"/>
    <property type="project" value="GO_Central"/>
</dbReference>
<dbReference type="FunFam" id="1.10.10.10:FF:000293">
    <property type="entry name" value="Tigger transposable element-derived protein 5"/>
    <property type="match status" value="1"/>
</dbReference>
<dbReference type="Gene3D" id="1.10.10.60">
    <property type="entry name" value="Homeodomain-like"/>
    <property type="match status" value="1"/>
</dbReference>
<dbReference type="Gene3D" id="1.10.10.10">
    <property type="entry name" value="Winged helix-like DNA-binding domain superfamily/Winged helix DNA-binding domain"/>
    <property type="match status" value="1"/>
</dbReference>
<dbReference type="InterPro" id="IPR050863">
    <property type="entry name" value="CenT-Element_Derived"/>
</dbReference>
<dbReference type="InterPro" id="IPR004875">
    <property type="entry name" value="DDE_SF_endonuclease_dom"/>
</dbReference>
<dbReference type="InterPro" id="IPR009057">
    <property type="entry name" value="Homeodomain-like_sf"/>
</dbReference>
<dbReference type="InterPro" id="IPR006600">
    <property type="entry name" value="HTH_CenpB_DNA-bd_dom"/>
</dbReference>
<dbReference type="InterPro" id="IPR007889">
    <property type="entry name" value="HTH_Psq"/>
</dbReference>
<dbReference type="InterPro" id="IPR036388">
    <property type="entry name" value="WH-like_DNA-bd_sf"/>
</dbReference>
<dbReference type="PANTHER" id="PTHR19303:SF56">
    <property type="entry name" value="TIGGER TRANSPOSABLE ELEMENT-DERIVED PROTEIN 5"/>
    <property type="match status" value="1"/>
</dbReference>
<dbReference type="PANTHER" id="PTHR19303">
    <property type="entry name" value="TRANSPOSON"/>
    <property type="match status" value="1"/>
</dbReference>
<dbReference type="Pfam" id="PF04218">
    <property type="entry name" value="CENP-B_N"/>
    <property type="match status" value="1"/>
</dbReference>
<dbReference type="Pfam" id="PF03184">
    <property type="entry name" value="DDE_1"/>
    <property type="match status" value="1"/>
</dbReference>
<dbReference type="Pfam" id="PF03221">
    <property type="entry name" value="HTH_Tnp_Tc5"/>
    <property type="match status" value="1"/>
</dbReference>
<dbReference type="SMART" id="SM00674">
    <property type="entry name" value="CENPB"/>
    <property type="match status" value="1"/>
</dbReference>
<dbReference type="SUPFAM" id="SSF46689">
    <property type="entry name" value="Homeodomain-like"/>
    <property type="match status" value="2"/>
</dbReference>
<dbReference type="PROSITE" id="PS51253">
    <property type="entry name" value="HTH_CENPB"/>
    <property type="match status" value="1"/>
</dbReference>
<dbReference type="PROSITE" id="PS50960">
    <property type="entry name" value="HTH_PSQ"/>
    <property type="match status" value="1"/>
</dbReference>
<reference key="1">
    <citation type="journal article" date="2009" name="Genome Biol.">
        <title>A whole-genome assembly of the domestic cow, Bos taurus.</title>
        <authorList>
            <person name="Zimin A.V."/>
            <person name="Delcher A.L."/>
            <person name="Florea L."/>
            <person name="Kelley D.R."/>
            <person name="Schatz M.C."/>
            <person name="Puiu D."/>
            <person name="Hanrahan F."/>
            <person name="Pertea G."/>
            <person name="Van Tassell C.P."/>
            <person name="Sonstegard T.S."/>
            <person name="Marcais G."/>
            <person name="Roberts M."/>
            <person name="Subramanian P."/>
            <person name="Yorke J.A."/>
            <person name="Salzberg S.L."/>
        </authorList>
    </citation>
    <scope>NUCLEOTIDE SEQUENCE [LARGE SCALE GENOMIC DNA]</scope>
    <source>
        <strain>Hereford</strain>
    </source>
</reference>
<organism>
    <name type="scientific">Bos taurus</name>
    <name type="common">Bovine</name>
    <dbReference type="NCBI Taxonomy" id="9913"/>
    <lineage>
        <taxon>Eukaryota</taxon>
        <taxon>Metazoa</taxon>
        <taxon>Chordata</taxon>
        <taxon>Craniata</taxon>
        <taxon>Vertebrata</taxon>
        <taxon>Euteleostomi</taxon>
        <taxon>Mammalia</taxon>
        <taxon>Eutheria</taxon>
        <taxon>Laurasiatheria</taxon>
        <taxon>Artiodactyla</taxon>
        <taxon>Ruminantia</taxon>
        <taxon>Pecora</taxon>
        <taxon>Bovidae</taxon>
        <taxon>Bovinae</taxon>
        <taxon>Bos</taxon>
    </lineage>
</organism>
<gene>
    <name type="primary">TIGD5</name>
</gene>
<sequence length="643" mass="70331">MYSAGPPAVPAPRRCRRPPPGRPMQPPRPPAPAPVPAARPPPPAPGPRPRVAVKMAFRKAYSIKDKLQAIERVKGGERQASVCRDFGVPGGTLRGWLKDEPKLRWFLEQLGGEVGTQRKKMRLANEEEIDRAVYSWFLALRQHGVPLSGPLIQAQAEAFARQIYGPECTFKASHGWFWRWQKRHGISSQRIYGEAEPVAAGPAPGPPVKQEPAQPTRAGPLPDRAASTPAPAEGGYGDEQIYNANVTGLYWKLLPEQAAPVGAGGCGRRWRGDRVTVLLAANLTGSHKLKPLVIGQLPDPPSLRHHNQDKFPASYRYSPDAWLSRPLLRGWFFEEFVPGVRRYLRRSCLQQKAVLLVAHPPCPSSEARMPALEESEETRRRCRPEPTGPPEELQTPDGAVRVLFLCRGSGRAHIPAPLEQGVVAAFKQLYKRELLRLAVSCAGGSPLDFMRSFMLKDMLYLAGLSWDLVQAGSIERCWLLGLRAAFEPRPVEERAGQPAGQAEEAAEHSRVLSDLTHLAALAYKRLAPEEVAEWLHLDDDGGLPDGGREDWGPSRPPVLVPGGPLLPASLPSAVAGGAEEEEEEAIPTAGEAVRGLETALRWLETQDPREVGPLKLVQLRSLISTARRLGGIGPSPMVPDDGL</sequence>